<accession>Q9JXT2</accession>
<keyword id="KW-0030">Aminoacyl-tRNA synthetase</keyword>
<keyword id="KW-0067">ATP-binding</keyword>
<keyword id="KW-0963">Cytoplasm</keyword>
<keyword id="KW-0436">Ligase</keyword>
<keyword id="KW-0547">Nucleotide-binding</keyword>
<keyword id="KW-0648">Protein biosynthesis</keyword>
<keyword id="KW-1185">Reference proteome</keyword>
<sequence>MQEQYRPAAIEPAAQKKWDDARIFNVSEDASKPKYYCLSMFPYPSGKLHMGHVRNYTIGDVLSRFKLLNGFNVMQPMGWDAFGMPAENAAMKNNVAPAAWTYDNIEYMKTQLKSLGFAIDWARETATCKPEYYRWEQWLFTKLFEKGIVYRKNGTVNWDPVDQTVLANEQVIDGRGWRSGALIEKREIPMYYFKITDYAEELLNDLDKLEHWPEQVKTMQRNWIGKSRGMTVRFAVSDDSKQGLEGDYAKFLQVYTTRPDTLMGATYVAVAAEHPLAAAAAADKPELQAFIAECKAGSVAEADMATMEKKGVPTGRYVVNPLNGDKLEVWIANYVLWGYGDGAVMAVPAHDERDFEFATKYNLPKKQVIAVGDNAFDENQWQEWYGDKENGVLVNSGDLDGLDFQTAFDAVAAKLQSQGAGEPKTQYRLRDWGISRQRYWGCPIPIVHCEQCGDVPVPADQLPVVLPENVVPDGMGSPLAKMPEFYETACPCCGGAAKRETDTMDTFMESSWYFFRYMSPKFSDGMVDPAAAKYWGAVDQYIGGIEHAILHLLYARFFTKLMRDEGLVNVDEPFERLLTQGMVVCETYYRENDKGGKDWINPADVELTFDDKGRPISAVLKADGLPVVISGTEKMSKSKNNGVDPQELINAYGADTARLFMMFAAPPEQSLEWSDSGVEGAHRFLRRLWRTVYEYLKQGEAVKAFAGSQDGLSKELKDLRHKLHATTAKVSDDYGRRQQFNTAIAAVMELLNQYDKTDTGGEQGRAVAQEVLETAVRLLWPIVPHICETLWSELNGAKLWEAGWPTVDEAALVKSEIEVMVQVNGKLRGKITVAADASKADLEAAALATEGAVKFMEGKPAKKIIVVPGRLVNIVV</sequence>
<feature type="chain" id="PRO_0000152054" description="Leucine--tRNA ligase">
    <location>
        <begin position="1"/>
        <end position="876"/>
    </location>
</feature>
<feature type="short sequence motif" description="'HIGH' region">
    <location>
        <begin position="42"/>
        <end position="52"/>
    </location>
</feature>
<feature type="short sequence motif" description="'KMSKS' region">
    <location>
        <begin position="634"/>
        <end position="638"/>
    </location>
</feature>
<feature type="binding site" evidence="1">
    <location>
        <position position="637"/>
    </location>
    <ligand>
        <name>ATP</name>
        <dbReference type="ChEBI" id="CHEBI:30616"/>
    </ligand>
</feature>
<reference key="1">
    <citation type="journal article" date="2000" name="Science">
        <title>Complete genome sequence of Neisseria meningitidis serogroup B strain MC58.</title>
        <authorList>
            <person name="Tettelin H."/>
            <person name="Saunders N.J."/>
            <person name="Heidelberg J.F."/>
            <person name="Jeffries A.C."/>
            <person name="Nelson K.E."/>
            <person name="Eisen J.A."/>
            <person name="Ketchum K.A."/>
            <person name="Hood D.W."/>
            <person name="Peden J.F."/>
            <person name="Dodson R.J."/>
            <person name="Nelson W.C."/>
            <person name="Gwinn M.L."/>
            <person name="DeBoy R.T."/>
            <person name="Peterson J.D."/>
            <person name="Hickey E.K."/>
            <person name="Haft D.H."/>
            <person name="Salzberg S.L."/>
            <person name="White O."/>
            <person name="Fleischmann R.D."/>
            <person name="Dougherty B.A."/>
            <person name="Mason T.M."/>
            <person name="Ciecko A."/>
            <person name="Parksey D.S."/>
            <person name="Blair E."/>
            <person name="Cittone H."/>
            <person name="Clark E.B."/>
            <person name="Cotton M.D."/>
            <person name="Utterback T.R."/>
            <person name="Khouri H.M."/>
            <person name="Qin H."/>
            <person name="Vamathevan J.J."/>
            <person name="Gill J."/>
            <person name="Scarlato V."/>
            <person name="Masignani V."/>
            <person name="Pizza M."/>
            <person name="Grandi G."/>
            <person name="Sun L."/>
            <person name="Smith H.O."/>
            <person name="Fraser C.M."/>
            <person name="Moxon E.R."/>
            <person name="Rappuoli R."/>
            <person name="Venter J.C."/>
        </authorList>
    </citation>
    <scope>NUCLEOTIDE SEQUENCE [LARGE SCALE GENOMIC DNA]</scope>
    <source>
        <strain>ATCC BAA-335 / MC58</strain>
    </source>
</reference>
<reference key="2">
    <citation type="journal article" date="2005" name="Hum. Vaccin.">
        <title>Characterization of the protein content of a meningococcal outer membrane vesicle vaccine by polyacrylamide gel electrophoresis and mass spectrometry.</title>
        <authorList>
            <person name="Vipond C."/>
            <person name="Wheeler J.X."/>
            <person name="Jones C."/>
            <person name="Feavers I.M."/>
            <person name="Suker J."/>
        </authorList>
    </citation>
    <scope>IDENTIFICATION BY MASS SPECTROMETRY [LARGE SCALE ANALYSIS]</scope>
</reference>
<dbReference type="EC" id="6.1.1.4" evidence="1"/>
<dbReference type="EMBL" id="AE002098">
    <property type="protein sequence ID" value="AAF42228.1"/>
    <property type="molecule type" value="Genomic_DNA"/>
</dbReference>
<dbReference type="PIR" id="G81029">
    <property type="entry name" value="G81029"/>
</dbReference>
<dbReference type="RefSeq" id="NP_274892.1">
    <property type="nucleotide sequence ID" value="NC_003112.2"/>
</dbReference>
<dbReference type="RefSeq" id="WP_002225801.1">
    <property type="nucleotide sequence ID" value="NC_003112.2"/>
</dbReference>
<dbReference type="SMR" id="Q9JXT2"/>
<dbReference type="FunCoup" id="Q9JXT2">
    <property type="interactions" value="536"/>
</dbReference>
<dbReference type="STRING" id="122586.NMB1897"/>
<dbReference type="PaxDb" id="122586-NMB1897"/>
<dbReference type="KEGG" id="nme:NMB1897"/>
<dbReference type="PATRIC" id="fig|122586.8.peg.2420"/>
<dbReference type="HOGENOM" id="CLU_004427_0_0_4"/>
<dbReference type="InParanoid" id="Q9JXT2"/>
<dbReference type="OrthoDB" id="9810365at2"/>
<dbReference type="Proteomes" id="UP000000425">
    <property type="component" value="Chromosome"/>
</dbReference>
<dbReference type="GO" id="GO:0005829">
    <property type="term" value="C:cytosol"/>
    <property type="evidence" value="ECO:0000318"/>
    <property type="project" value="GO_Central"/>
</dbReference>
<dbReference type="GO" id="GO:0002161">
    <property type="term" value="F:aminoacyl-tRNA deacylase activity"/>
    <property type="evidence" value="ECO:0007669"/>
    <property type="project" value="InterPro"/>
</dbReference>
<dbReference type="GO" id="GO:0005524">
    <property type="term" value="F:ATP binding"/>
    <property type="evidence" value="ECO:0007669"/>
    <property type="project" value="UniProtKB-UniRule"/>
</dbReference>
<dbReference type="GO" id="GO:0004823">
    <property type="term" value="F:leucine-tRNA ligase activity"/>
    <property type="evidence" value="ECO:0000318"/>
    <property type="project" value="GO_Central"/>
</dbReference>
<dbReference type="GO" id="GO:0006429">
    <property type="term" value="P:leucyl-tRNA aminoacylation"/>
    <property type="evidence" value="ECO:0000318"/>
    <property type="project" value="GO_Central"/>
</dbReference>
<dbReference type="CDD" id="cd07958">
    <property type="entry name" value="Anticodon_Ia_Leu_BEm"/>
    <property type="match status" value="1"/>
</dbReference>
<dbReference type="CDD" id="cd00812">
    <property type="entry name" value="LeuRS_core"/>
    <property type="match status" value="1"/>
</dbReference>
<dbReference type="FunFam" id="1.10.730.10:FF:000003">
    <property type="entry name" value="Leucine--tRNA ligase"/>
    <property type="match status" value="1"/>
</dbReference>
<dbReference type="FunFam" id="2.20.28.290:FF:000001">
    <property type="entry name" value="Leucine--tRNA ligase"/>
    <property type="match status" value="1"/>
</dbReference>
<dbReference type="FunFam" id="3.10.20.590:FF:000001">
    <property type="entry name" value="Leucine--tRNA ligase"/>
    <property type="match status" value="1"/>
</dbReference>
<dbReference type="FunFam" id="3.40.50.620:FF:000003">
    <property type="entry name" value="Leucine--tRNA ligase"/>
    <property type="match status" value="1"/>
</dbReference>
<dbReference type="FunFam" id="3.40.50.620:FF:000124">
    <property type="entry name" value="Leucine--tRNA ligase"/>
    <property type="match status" value="1"/>
</dbReference>
<dbReference type="FunFam" id="3.90.740.10:FF:000012">
    <property type="entry name" value="Leucine--tRNA ligase"/>
    <property type="match status" value="1"/>
</dbReference>
<dbReference type="Gene3D" id="2.20.28.290">
    <property type="match status" value="1"/>
</dbReference>
<dbReference type="Gene3D" id="3.10.20.590">
    <property type="match status" value="1"/>
</dbReference>
<dbReference type="Gene3D" id="3.40.50.620">
    <property type="entry name" value="HUPs"/>
    <property type="match status" value="2"/>
</dbReference>
<dbReference type="Gene3D" id="1.10.730.10">
    <property type="entry name" value="Isoleucyl-tRNA Synthetase, Domain 1"/>
    <property type="match status" value="2"/>
</dbReference>
<dbReference type="Gene3D" id="3.90.740.10">
    <property type="entry name" value="Valyl/Leucyl/Isoleucyl-tRNA synthetase, editing domain"/>
    <property type="match status" value="1"/>
</dbReference>
<dbReference type="HAMAP" id="MF_00049_B">
    <property type="entry name" value="Leu_tRNA_synth_B"/>
    <property type="match status" value="1"/>
</dbReference>
<dbReference type="InterPro" id="IPR001412">
    <property type="entry name" value="aa-tRNA-synth_I_CS"/>
</dbReference>
<dbReference type="InterPro" id="IPR002300">
    <property type="entry name" value="aa-tRNA-synth_Ia"/>
</dbReference>
<dbReference type="InterPro" id="IPR002302">
    <property type="entry name" value="Leu-tRNA-ligase"/>
</dbReference>
<dbReference type="InterPro" id="IPR025709">
    <property type="entry name" value="Leu_tRNA-synth_edit"/>
</dbReference>
<dbReference type="InterPro" id="IPR013155">
    <property type="entry name" value="M/V/L/I-tRNA-synth_anticd-bd"/>
</dbReference>
<dbReference type="InterPro" id="IPR015413">
    <property type="entry name" value="Methionyl/Leucyl_tRNA_Synth"/>
</dbReference>
<dbReference type="InterPro" id="IPR014729">
    <property type="entry name" value="Rossmann-like_a/b/a_fold"/>
</dbReference>
<dbReference type="InterPro" id="IPR009080">
    <property type="entry name" value="tRNAsynth_Ia_anticodon-bd"/>
</dbReference>
<dbReference type="InterPro" id="IPR009008">
    <property type="entry name" value="Val/Leu/Ile-tRNA-synth_edit"/>
</dbReference>
<dbReference type="NCBIfam" id="TIGR00396">
    <property type="entry name" value="leuS_bact"/>
    <property type="match status" value="1"/>
</dbReference>
<dbReference type="PANTHER" id="PTHR43740:SF2">
    <property type="entry name" value="LEUCINE--TRNA LIGASE, MITOCHONDRIAL"/>
    <property type="match status" value="1"/>
</dbReference>
<dbReference type="PANTHER" id="PTHR43740">
    <property type="entry name" value="LEUCYL-TRNA SYNTHETASE"/>
    <property type="match status" value="1"/>
</dbReference>
<dbReference type="Pfam" id="PF08264">
    <property type="entry name" value="Anticodon_1"/>
    <property type="match status" value="1"/>
</dbReference>
<dbReference type="Pfam" id="PF00133">
    <property type="entry name" value="tRNA-synt_1"/>
    <property type="match status" value="2"/>
</dbReference>
<dbReference type="Pfam" id="PF13603">
    <property type="entry name" value="tRNA-synt_1_2"/>
    <property type="match status" value="1"/>
</dbReference>
<dbReference type="Pfam" id="PF09334">
    <property type="entry name" value="tRNA-synt_1g"/>
    <property type="match status" value="1"/>
</dbReference>
<dbReference type="PRINTS" id="PR00985">
    <property type="entry name" value="TRNASYNTHLEU"/>
</dbReference>
<dbReference type="SUPFAM" id="SSF47323">
    <property type="entry name" value="Anticodon-binding domain of a subclass of class I aminoacyl-tRNA synthetases"/>
    <property type="match status" value="1"/>
</dbReference>
<dbReference type="SUPFAM" id="SSF52374">
    <property type="entry name" value="Nucleotidylyl transferase"/>
    <property type="match status" value="1"/>
</dbReference>
<dbReference type="SUPFAM" id="SSF50677">
    <property type="entry name" value="ValRS/IleRS/LeuRS editing domain"/>
    <property type="match status" value="1"/>
</dbReference>
<dbReference type="PROSITE" id="PS00178">
    <property type="entry name" value="AA_TRNA_LIGASE_I"/>
    <property type="match status" value="1"/>
</dbReference>
<protein>
    <recommendedName>
        <fullName evidence="1">Leucine--tRNA ligase</fullName>
        <ecNumber evidence="1">6.1.1.4</ecNumber>
    </recommendedName>
    <alternativeName>
        <fullName evidence="1">Leucyl-tRNA synthetase</fullName>
        <shortName evidence="1">LeuRS</shortName>
    </alternativeName>
</protein>
<evidence type="ECO:0000255" key="1">
    <source>
        <dbReference type="HAMAP-Rule" id="MF_00049"/>
    </source>
</evidence>
<proteinExistence type="evidence at protein level"/>
<name>SYL_NEIMB</name>
<gene>
    <name evidence="1" type="primary">leuS</name>
    <name type="ordered locus">NMB1897</name>
</gene>
<comment type="catalytic activity">
    <reaction evidence="1">
        <text>tRNA(Leu) + L-leucine + ATP = L-leucyl-tRNA(Leu) + AMP + diphosphate</text>
        <dbReference type="Rhea" id="RHEA:11688"/>
        <dbReference type="Rhea" id="RHEA-COMP:9613"/>
        <dbReference type="Rhea" id="RHEA-COMP:9622"/>
        <dbReference type="ChEBI" id="CHEBI:30616"/>
        <dbReference type="ChEBI" id="CHEBI:33019"/>
        <dbReference type="ChEBI" id="CHEBI:57427"/>
        <dbReference type="ChEBI" id="CHEBI:78442"/>
        <dbReference type="ChEBI" id="CHEBI:78494"/>
        <dbReference type="ChEBI" id="CHEBI:456215"/>
        <dbReference type="EC" id="6.1.1.4"/>
    </reaction>
</comment>
<comment type="subcellular location">
    <subcellularLocation>
        <location evidence="1">Cytoplasm</location>
    </subcellularLocation>
</comment>
<comment type="miscellaneous">
    <text>Present in outer membrane vesicle formulations which are used as vaccines in human.</text>
</comment>
<comment type="similarity">
    <text evidence="1">Belongs to the class-I aminoacyl-tRNA synthetase family.</text>
</comment>
<organism>
    <name type="scientific">Neisseria meningitidis serogroup B (strain ATCC BAA-335 / MC58)</name>
    <dbReference type="NCBI Taxonomy" id="122586"/>
    <lineage>
        <taxon>Bacteria</taxon>
        <taxon>Pseudomonadati</taxon>
        <taxon>Pseudomonadota</taxon>
        <taxon>Betaproteobacteria</taxon>
        <taxon>Neisseriales</taxon>
        <taxon>Neisseriaceae</taxon>
        <taxon>Neisseria</taxon>
    </lineage>
</organism>